<dbReference type="EMBL" id="CP000454">
    <property type="protein sequence ID" value="ABK01405.1"/>
    <property type="molecule type" value="Genomic_DNA"/>
</dbReference>
<dbReference type="RefSeq" id="WP_011689875.1">
    <property type="nucleotide sequence ID" value="NC_008541.1"/>
</dbReference>
<dbReference type="SMR" id="A0JQT5"/>
<dbReference type="STRING" id="290399.Arth_0004"/>
<dbReference type="KEGG" id="art:Arth_0004"/>
<dbReference type="eggNOG" id="COG1195">
    <property type="taxonomic scope" value="Bacteria"/>
</dbReference>
<dbReference type="HOGENOM" id="CLU_040267_1_1_11"/>
<dbReference type="OrthoDB" id="9803889at2"/>
<dbReference type="Proteomes" id="UP000000754">
    <property type="component" value="Chromosome"/>
</dbReference>
<dbReference type="GO" id="GO:0005737">
    <property type="term" value="C:cytoplasm"/>
    <property type="evidence" value="ECO:0007669"/>
    <property type="project" value="UniProtKB-SubCell"/>
</dbReference>
<dbReference type="GO" id="GO:0005524">
    <property type="term" value="F:ATP binding"/>
    <property type="evidence" value="ECO:0007669"/>
    <property type="project" value="UniProtKB-UniRule"/>
</dbReference>
<dbReference type="GO" id="GO:0016887">
    <property type="term" value="F:ATP hydrolysis activity"/>
    <property type="evidence" value="ECO:0007669"/>
    <property type="project" value="InterPro"/>
</dbReference>
<dbReference type="GO" id="GO:0003697">
    <property type="term" value="F:single-stranded DNA binding"/>
    <property type="evidence" value="ECO:0007669"/>
    <property type="project" value="UniProtKB-UniRule"/>
</dbReference>
<dbReference type="GO" id="GO:0006260">
    <property type="term" value="P:DNA replication"/>
    <property type="evidence" value="ECO:0007669"/>
    <property type="project" value="UniProtKB-UniRule"/>
</dbReference>
<dbReference type="GO" id="GO:0000731">
    <property type="term" value="P:DNA synthesis involved in DNA repair"/>
    <property type="evidence" value="ECO:0007669"/>
    <property type="project" value="TreeGrafter"/>
</dbReference>
<dbReference type="GO" id="GO:0006302">
    <property type="term" value="P:double-strand break repair"/>
    <property type="evidence" value="ECO:0007669"/>
    <property type="project" value="TreeGrafter"/>
</dbReference>
<dbReference type="GO" id="GO:0009432">
    <property type="term" value="P:SOS response"/>
    <property type="evidence" value="ECO:0007669"/>
    <property type="project" value="UniProtKB-UniRule"/>
</dbReference>
<dbReference type="Gene3D" id="3.40.50.300">
    <property type="entry name" value="P-loop containing nucleotide triphosphate hydrolases"/>
    <property type="match status" value="1"/>
</dbReference>
<dbReference type="Gene3D" id="1.20.1050.90">
    <property type="entry name" value="RecF/RecN/SMC, N-terminal domain"/>
    <property type="match status" value="1"/>
</dbReference>
<dbReference type="HAMAP" id="MF_00365">
    <property type="entry name" value="RecF"/>
    <property type="match status" value="1"/>
</dbReference>
<dbReference type="InterPro" id="IPR003593">
    <property type="entry name" value="AAA+_ATPase"/>
</dbReference>
<dbReference type="InterPro" id="IPR001238">
    <property type="entry name" value="DNA-binding_RecF"/>
</dbReference>
<dbReference type="InterPro" id="IPR018078">
    <property type="entry name" value="DNA-binding_RecF_CS"/>
</dbReference>
<dbReference type="InterPro" id="IPR027417">
    <property type="entry name" value="P-loop_NTPase"/>
</dbReference>
<dbReference type="InterPro" id="IPR003395">
    <property type="entry name" value="RecF/RecN/SMC_N"/>
</dbReference>
<dbReference type="InterPro" id="IPR042174">
    <property type="entry name" value="RecF_2"/>
</dbReference>
<dbReference type="NCBIfam" id="TIGR00611">
    <property type="entry name" value="recf"/>
    <property type="match status" value="1"/>
</dbReference>
<dbReference type="PANTHER" id="PTHR32182">
    <property type="entry name" value="DNA REPLICATION AND REPAIR PROTEIN RECF"/>
    <property type="match status" value="1"/>
</dbReference>
<dbReference type="PANTHER" id="PTHR32182:SF0">
    <property type="entry name" value="DNA REPLICATION AND REPAIR PROTEIN RECF"/>
    <property type="match status" value="1"/>
</dbReference>
<dbReference type="Pfam" id="PF02463">
    <property type="entry name" value="SMC_N"/>
    <property type="match status" value="1"/>
</dbReference>
<dbReference type="SMART" id="SM00382">
    <property type="entry name" value="AAA"/>
    <property type="match status" value="1"/>
</dbReference>
<dbReference type="SUPFAM" id="SSF52540">
    <property type="entry name" value="P-loop containing nucleoside triphosphate hydrolases"/>
    <property type="match status" value="1"/>
</dbReference>
<dbReference type="PROSITE" id="PS00617">
    <property type="entry name" value="RECF_1"/>
    <property type="match status" value="1"/>
</dbReference>
<dbReference type="PROSITE" id="PS00618">
    <property type="entry name" value="RECF_2"/>
    <property type="match status" value="1"/>
</dbReference>
<keyword id="KW-0067">ATP-binding</keyword>
<keyword id="KW-0963">Cytoplasm</keyword>
<keyword id="KW-0227">DNA damage</keyword>
<keyword id="KW-0234">DNA repair</keyword>
<keyword id="KW-0235">DNA replication</keyword>
<keyword id="KW-0238">DNA-binding</keyword>
<keyword id="KW-0547">Nucleotide-binding</keyword>
<keyword id="KW-1185">Reference proteome</keyword>
<keyword id="KW-0742">SOS response</keyword>
<feature type="chain" id="PRO_1000048502" description="DNA replication and repair protein RecF">
    <location>
        <begin position="1"/>
        <end position="401"/>
    </location>
</feature>
<feature type="binding site" evidence="1">
    <location>
        <begin position="30"/>
        <end position="37"/>
    </location>
    <ligand>
        <name>ATP</name>
        <dbReference type="ChEBI" id="CHEBI:30616"/>
    </ligand>
</feature>
<accession>A0JQT5</accession>
<comment type="function">
    <text evidence="1">The RecF protein is involved in DNA metabolism; it is required for DNA replication and normal SOS inducibility. RecF binds preferentially to single-stranded, linear DNA. It also seems to bind ATP.</text>
</comment>
<comment type="subcellular location">
    <subcellularLocation>
        <location evidence="1">Cytoplasm</location>
    </subcellularLocation>
</comment>
<comment type="similarity">
    <text evidence="1">Belongs to the RecF family.</text>
</comment>
<protein>
    <recommendedName>
        <fullName evidence="1">DNA replication and repair protein RecF</fullName>
    </recommendedName>
</protein>
<organism>
    <name type="scientific">Arthrobacter sp. (strain FB24)</name>
    <dbReference type="NCBI Taxonomy" id="290399"/>
    <lineage>
        <taxon>Bacteria</taxon>
        <taxon>Bacillati</taxon>
        <taxon>Actinomycetota</taxon>
        <taxon>Actinomycetes</taxon>
        <taxon>Micrococcales</taxon>
        <taxon>Micrococcaceae</taxon>
        <taxon>Arthrobacter</taxon>
    </lineage>
</organism>
<proteinExistence type="inferred from homology"/>
<evidence type="ECO:0000255" key="1">
    <source>
        <dbReference type="HAMAP-Rule" id="MF_00365"/>
    </source>
</evidence>
<name>RECF_ARTS2</name>
<gene>
    <name evidence="1" type="primary">recF</name>
    <name type="ordered locus">Arth_0004</name>
</gene>
<reference key="1">
    <citation type="journal article" date="2013" name="Stand. Genomic Sci.">
        <title>Complete genome sequence of Arthrobacter sp. strain FB24.</title>
        <authorList>
            <person name="Nakatsu C.H."/>
            <person name="Barabote R."/>
            <person name="Thompson S."/>
            <person name="Bruce D."/>
            <person name="Detter C."/>
            <person name="Brettin T."/>
            <person name="Han C."/>
            <person name="Beasley F."/>
            <person name="Chen W."/>
            <person name="Konopka A."/>
            <person name="Xie G."/>
        </authorList>
    </citation>
    <scope>NUCLEOTIDE SEQUENCE [LARGE SCALE GENOMIC DNA]</scope>
    <source>
        <strain>FB24</strain>
    </source>
</reference>
<sequence length="401" mass="43951">MYLEKLSLTDFRSYAQVDLTLEPGVTVLVGYNGIGKTNLMEAIGYLATLSSHRVSSDAPLLRFGTERALIRAKLVRGGQSTVLELEINGSRANRGRINRSNPVRARDILGICQTVLFAPEDLALVKGDPSNRRRFLDELLVSLMPRHSATRTDYDRVLKQRNALLKSGRSGKFTAGHEATLDVWDQHMARAGAELLYARLELVERIRPHLKAAYAQLTDGSKEADAIYRSTLQGILDDDGAGAGYAAEPAAVERVEDLRALSVEELTQRYVQAFAASRRKELERGISLVGPHRDDVELILGEAPAKGYASHGETWSMCLSLRLASYYVMLDDARTGGSAPILILDDVFAELDVQRRRKLAAIVSGAEQVLVTAAVDADIPDELAGRRVKVVPGGIDESESR</sequence>